<name>PEPAF_RABIT</name>
<feature type="signal peptide">
    <location>
        <begin position="1"/>
        <end position="15"/>
    </location>
</feature>
<feature type="propeptide" id="PRO_0000026036" description="Activation peptide">
    <location>
        <begin position="16"/>
        <end position="58"/>
    </location>
</feature>
<feature type="chain" id="PRO_0000026037" description="Pepsin F">
    <location>
        <begin position="59"/>
        <end position="388"/>
    </location>
</feature>
<feature type="domain" description="Peptidase A1" evidence="2">
    <location>
        <begin position="74"/>
        <end position="385"/>
    </location>
</feature>
<feature type="active site" evidence="3">
    <location>
        <position position="92"/>
    </location>
</feature>
<feature type="active site" evidence="3">
    <location>
        <position position="275"/>
    </location>
</feature>
<feature type="disulfide bond" evidence="1">
    <location>
        <begin position="105"/>
        <end position="110"/>
    </location>
</feature>
<feature type="disulfide bond" evidence="1">
    <location>
        <begin position="266"/>
        <end position="270"/>
    </location>
</feature>
<feature type="disulfide bond" evidence="1">
    <location>
        <begin position="309"/>
        <end position="343"/>
    </location>
</feature>
<protein>
    <recommendedName>
        <fullName>Pepsin F</fullName>
        <ecNumber>3.4.23.1</ecNumber>
    </recommendedName>
</protein>
<comment type="function">
    <text>Shows particularly broad specificity; although bonds involving phenylalanine and leucine are preferred, many others are also cleaved to some extent.</text>
</comment>
<comment type="catalytic activity">
    <reaction evidence="3">
        <text>Preferential cleavage: hydrophobic, preferably aromatic, residues in P1 and P1' positions. Cleaves 1-Phe-|-Val-2, 4-Gln-|-His-5, 13-Glu-|-Ala-14, 14-Ala-|-Leu-15, 15-Leu-|-Tyr-16, 16-Tyr-|-Leu-17, 23-Gly-|-Phe-24, 24-Phe-|-Phe-25 and 25-Phe-|-Tyr-26 bonds in the B chain of insulin.</text>
        <dbReference type="EC" id="3.4.23.1"/>
    </reaction>
</comment>
<comment type="subcellular location">
    <subcellularLocation>
        <location>Secreted</location>
    </subcellularLocation>
</comment>
<comment type="developmental stage">
    <text>Early postnatal.</text>
</comment>
<comment type="similarity">
    <text evidence="4">Belongs to the peptidase A1 family.</text>
</comment>
<keyword id="KW-0064">Aspartyl protease</keyword>
<keyword id="KW-0222">Digestion</keyword>
<keyword id="KW-1015">Disulfide bond</keyword>
<keyword id="KW-0378">Hydrolase</keyword>
<keyword id="KW-0645">Protease</keyword>
<keyword id="KW-1185">Reference proteome</keyword>
<keyword id="KW-0964">Secreted</keyword>
<keyword id="KW-0732">Signal</keyword>
<keyword id="KW-0865">Zymogen</keyword>
<organism>
    <name type="scientific">Oryctolagus cuniculus</name>
    <name type="common">Rabbit</name>
    <dbReference type="NCBI Taxonomy" id="9986"/>
    <lineage>
        <taxon>Eukaryota</taxon>
        <taxon>Metazoa</taxon>
        <taxon>Chordata</taxon>
        <taxon>Craniata</taxon>
        <taxon>Vertebrata</taxon>
        <taxon>Euteleostomi</taxon>
        <taxon>Mammalia</taxon>
        <taxon>Eutheria</taxon>
        <taxon>Euarchontoglires</taxon>
        <taxon>Glires</taxon>
        <taxon>Lagomorpha</taxon>
        <taxon>Leporidae</taxon>
        <taxon>Oryctolagus</taxon>
    </lineage>
</organism>
<evidence type="ECO:0000250" key="1"/>
<evidence type="ECO:0000255" key="2">
    <source>
        <dbReference type="PROSITE-ProRule" id="PRU01103"/>
    </source>
</evidence>
<evidence type="ECO:0000255" key="3">
    <source>
        <dbReference type="PROSITE-ProRule" id="PRU10094"/>
    </source>
</evidence>
<evidence type="ECO:0000305" key="4"/>
<reference key="1">
    <citation type="journal article" date="1990" name="J. Biol. Chem.">
        <title>Structure and development of rabbit pepsinogens. Stage-specific zymogens, nucleotide sequences of cDNAs, molecular evolution, and gene expression during development.</title>
        <authorList>
            <person name="Kageyama T."/>
            <person name="Tanabe K."/>
            <person name="Koiwai O."/>
        </authorList>
    </citation>
    <scope>NUCLEOTIDE SEQUENCE [MRNA]</scope>
    <source>
        <strain>Japanese white</strain>
        <tissue>Gastric mucosa</tissue>
    </source>
</reference>
<accession>P27823</accession>
<sequence length="388" mass="42786">MKWLGLLGLVALSECLVTIPLMKVKSMRENLRENDILLDYLEKHPYRPTYKLLSGQQDPDVSFEPLRNYLDLAYIGIISIGTPPQEFKVVLDTGSADLWVPSIYCSSPACGKHNTFNPLLSSTFLVSGRPINIVYGSGRMSGFLAYDTVQIAGLVDVAQAFGLSLQEPGKFMEYAVFDGILGLSYPSLSFEGITPVFDNLWAQGLISQNLFAFYLSSKEERGSMLMLGGVDPSYYSGDLHWVPVSRPLYWQLAVDRISMNGEAIGCDSGCQGIVDTGTSLLIGPRDPVLNIQKIINAQHSHGGEYIIDCDTISTLPDIIFTIDGVDYPVPASAYIRKSSVHGCYSNFDESAAHESEPYEVWVLGDVFLRLYFTVFDRANNRIGLAPAV</sequence>
<dbReference type="EC" id="3.4.23.1"/>
<dbReference type="EMBL" id="M59238">
    <property type="protein sequence ID" value="AAA31440.1"/>
    <property type="molecule type" value="mRNA"/>
</dbReference>
<dbReference type="PIR" id="A38302">
    <property type="entry name" value="A38302"/>
</dbReference>
<dbReference type="RefSeq" id="NP_001076165.1">
    <property type="nucleotide sequence ID" value="NM_001082696.1"/>
</dbReference>
<dbReference type="SMR" id="P27823"/>
<dbReference type="FunCoup" id="P27823">
    <property type="interactions" value="2"/>
</dbReference>
<dbReference type="STRING" id="9986.ENSOCUP00000006601"/>
<dbReference type="MEROPS" id="A01.051"/>
<dbReference type="PaxDb" id="9986-ENSOCUP00000006601"/>
<dbReference type="Ensembl" id="ENSOCUT00000007632.3">
    <property type="protein sequence ID" value="ENSOCUP00000006601.3"/>
    <property type="gene ID" value="ENSOCUG00000007632.3"/>
</dbReference>
<dbReference type="GeneID" id="100009429"/>
<dbReference type="KEGG" id="ocu:100009429"/>
<dbReference type="CTD" id="5222"/>
<dbReference type="eggNOG" id="KOG1339">
    <property type="taxonomic scope" value="Eukaryota"/>
</dbReference>
<dbReference type="GeneTree" id="ENSGT00940000153747"/>
<dbReference type="InParanoid" id="P27823"/>
<dbReference type="OrthoDB" id="771136at2759"/>
<dbReference type="Proteomes" id="UP000001811">
    <property type="component" value="Unplaced"/>
</dbReference>
<dbReference type="Bgee" id="ENSOCUG00000007632">
    <property type="expression patterns" value="Expressed in ovary and 1 other cell type or tissue"/>
</dbReference>
<dbReference type="GO" id="GO:0005576">
    <property type="term" value="C:extracellular region"/>
    <property type="evidence" value="ECO:0007669"/>
    <property type="project" value="UniProtKB-SubCell"/>
</dbReference>
<dbReference type="GO" id="GO:0004190">
    <property type="term" value="F:aspartic-type endopeptidase activity"/>
    <property type="evidence" value="ECO:0007669"/>
    <property type="project" value="UniProtKB-KW"/>
</dbReference>
<dbReference type="GO" id="GO:0007586">
    <property type="term" value="P:digestion"/>
    <property type="evidence" value="ECO:0007669"/>
    <property type="project" value="UniProtKB-KW"/>
</dbReference>
<dbReference type="GO" id="GO:0006508">
    <property type="term" value="P:proteolysis"/>
    <property type="evidence" value="ECO:0007669"/>
    <property type="project" value="UniProtKB-KW"/>
</dbReference>
<dbReference type="FunFam" id="2.40.70.10:FF:000006">
    <property type="entry name" value="Cathepsin E"/>
    <property type="match status" value="1"/>
</dbReference>
<dbReference type="FunFam" id="2.40.70.10:FF:000004">
    <property type="entry name" value="Pepsin A"/>
    <property type="match status" value="1"/>
</dbReference>
<dbReference type="Gene3D" id="6.10.140.60">
    <property type="match status" value="1"/>
</dbReference>
<dbReference type="Gene3D" id="2.40.70.10">
    <property type="entry name" value="Acid Proteases"/>
    <property type="match status" value="2"/>
</dbReference>
<dbReference type="InterPro" id="IPR001461">
    <property type="entry name" value="Aspartic_peptidase_A1"/>
</dbReference>
<dbReference type="InterPro" id="IPR001969">
    <property type="entry name" value="Aspartic_peptidase_AS"/>
</dbReference>
<dbReference type="InterPro" id="IPR012848">
    <property type="entry name" value="Aspartic_peptidase_N"/>
</dbReference>
<dbReference type="InterPro" id="IPR033121">
    <property type="entry name" value="PEPTIDASE_A1"/>
</dbReference>
<dbReference type="InterPro" id="IPR021109">
    <property type="entry name" value="Peptidase_aspartic_dom_sf"/>
</dbReference>
<dbReference type="PANTHER" id="PTHR47966">
    <property type="entry name" value="BETA-SITE APP-CLEAVING ENZYME, ISOFORM A-RELATED"/>
    <property type="match status" value="1"/>
</dbReference>
<dbReference type="PANTHER" id="PTHR47966:SF49">
    <property type="entry name" value="PEPSIN A-5"/>
    <property type="match status" value="1"/>
</dbReference>
<dbReference type="Pfam" id="PF07966">
    <property type="entry name" value="A1_Propeptide"/>
    <property type="match status" value="1"/>
</dbReference>
<dbReference type="Pfam" id="PF00026">
    <property type="entry name" value="Asp"/>
    <property type="match status" value="1"/>
</dbReference>
<dbReference type="PRINTS" id="PR00792">
    <property type="entry name" value="PEPSIN"/>
</dbReference>
<dbReference type="SUPFAM" id="SSF50630">
    <property type="entry name" value="Acid proteases"/>
    <property type="match status" value="1"/>
</dbReference>
<dbReference type="PROSITE" id="PS00141">
    <property type="entry name" value="ASP_PROTEASE"/>
    <property type="match status" value="2"/>
</dbReference>
<dbReference type="PROSITE" id="PS51767">
    <property type="entry name" value="PEPTIDASE_A1"/>
    <property type="match status" value="1"/>
</dbReference>
<proteinExistence type="evidence at transcript level"/>